<gene>
    <name evidence="1" type="primary">rlmH</name>
    <name type="ordered locus">ACICU_00991</name>
</gene>
<feature type="chain" id="PRO_0000366550" description="Ribosomal RNA large subunit methyltransferase H">
    <location>
        <begin position="1"/>
        <end position="159"/>
    </location>
</feature>
<feature type="binding site" evidence="1">
    <location>
        <position position="76"/>
    </location>
    <ligand>
        <name>S-adenosyl-L-methionine</name>
        <dbReference type="ChEBI" id="CHEBI:59789"/>
    </ligand>
</feature>
<feature type="binding site" evidence="1">
    <location>
        <position position="107"/>
    </location>
    <ligand>
        <name>S-adenosyl-L-methionine</name>
        <dbReference type="ChEBI" id="CHEBI:59789"/>
    </ligand>
</feature>
<feature type="binding site" evidence="1">
    <location>
        <begin position="126"/>
        <end position="131"/>
    </location>
    <ligand>
        <name>S-adenosyl-L-methionine</name>
        <dbReference type="ChEBI" id="CHEBI:59789"/>
    </ligand>
</feature>
<accession>B2HVT7</accession>
<organism>
    <name type="scientific">Acinetobacter baumannii (strain ACICU)</name>
    <dbReference type="NCBI Taxonomy" id="405416"/>
    <lineage>
        <taxon>Bacteria</taxon>
        <taxon>Pseudomonadati</taxon>
        <taxon>Pseudomonadota</taxon>
        <taxon>Gammaproteobacteria</taxon>
        <taxon>Moraxellales</taxon>
        <taxon>Moraxellaceae</taxon>
        <taxon>Acinetobacter</taxon>
        <taxon>Acinetobacter calcoaceticus/baumannii complex</taxon>
    </lineage>
</organism>
<name>RLMH_ACIBC</name>
<sequence>MKIRILTIGQKMPAWVLTGFEDYFKRIQPFVQTQVIELPMAKRGKNDSEADILKYCQIEGESILNALKPNETLIALEVGGRELSTEKLADTMKQWMLEGNDVALAIGGPDGLSDQVRKAAAWHWSLSKLTMPHPLVRILLIEQLYRAMSINHNHPYHRA</sequence>
<dbReference type="EC" id="2.1.1.177" evidence="1"/>
<dbReference type="EMBL" id="CP000863">
    <property type="protein sequence ID" value="ACC56303.1"/>
    <property type="molecule type" value="Genomic_DNA"/>
</dbReference>
<dbReference type="RefSeq" id="WP_000702193.1">
    <property type="nucleotide sequence ID" value="NZ_CP031380.1"/>
</dbReference>
<dbReference type="SMR" id="B2HVT7"/>
<dbReference type="GeneID" id="92892993"/>
<dbReference type="KEGG" id="abc:ACICU_00991"/>
<dbReference type="HOGENOM" id="CLU_100552_1_0_6"/>
<dbReference type="Proteomes" id="UP000008839">
    <property type="component" value="Chromosome"/>
</dbReference>
<dbReference type="GO" id="GO:0005737">
    <property type="term" value="C:cytoplasm"/>
    <property type="evidence" value="ECO:0007669"/>
    <property type="project" value="UniProtKB-SubCell"/>
</dbReference>
<dbReference type="GO" id="GO:0070038">
    <property type="term" value="F:rRNA (pseudouridine-N3-)-methyltransferase activity"/>
    <property type="evidence" value="ECO:0007669"/>
    <property type="project" value="UniProtKB-UniRule"/>
</dbReference>
<dbReference type="CDD" id="cd18081">
    <property type="entry name" value="RlmH-like"/>
    <property type="match status" value="1"/>
</dbReference>
<dbReference type="Gene3D" id="3.40.1280.10">
    <property type="match status" value="1"/>
</dbReference>
<dbReference type="HAMAP" id="MF_00658">
    <property type="entry name" value="23SrRNA_methyltr_H"/>
    <property type="match status" value="1"/>
</dbReference>
<dbReference type="InterPro" id="IPR029028">
    <property type="entry name" value="Alpha/beta_knot_MTases"/>
</dbReference>
<dbReference type="InterPro" id="IPR003742">
    <property type="entry name" value="RlmH-like"/>
</dbReference>
<dbReference type="InterPro" id="IPR029026">
    <property type="entry name" value="tRNA_m1G_MTases_N"/>
</dbReference>
<dbReference type="NCBIfam" id="NF000986">
    <property type="entry name" value="PRK00103.1-4"/>
    <property type="match status" value="1"/>
</dbReference>
<dbReference type="NCBIfam" id="TIGR00246">
    <property type="entry name" value="tRNA_RlmH_YbeA"/>
    <property type="match status" value="1"/>
</dbReference>
<dbReference type="PANTHER" id="PTHR33603">
    <property type="entry name" value="METHYLTRANSFERASE"/>
    <property type="match status" value="1"/>
</dbReference>
<dbReference type="PANTHER" id="PTHR33603:SF1">
    <property type="entry name" value="RIBOSOMAL RNA LARGE SUBUNIT METHYLTRANSFERASE H"/>
    <property type="match status" value="1"/>
</dbReference>
<dbReference type="Pfam" id="PF02590">
    <property type="entry name" value="SPOUT_MTase"/>
    <property type="match status" value="1"/>
</dbReference>
<dbReference type="PIRSF" id="PIRSF004505">
    <property type="entry name" value="MT_bac"/>
    <property type="match status" value="1"/>
</dbReference>
<dbReference type="SUPFAM" id="SSF75217">
    <property type="entry name" value="alpha/beta knot"/>
    <property type="match status" value="1"/>
</dbReference>
<reference key="1">
    <citation type="journal article" date="2008" name="Antimicrob. Agents Chemother.">
        <title>Whole-genome pyrosequencing of an epidemic multidrug-resistant Acinetobacter baumannii strain belonging to the European clone II group.</title>
        <authorList>
            <person name="Iacono M."/>
            <person name="Villa L."/>
            <person name="Fortini D."/>
            <person name="Bordoni R."/>
            <person name="Imperi F."/>
            <person name="Bonnal R.J."/>
            <person name="Sicheritz-Ponten T."/>
            <person name="De Bellis G."/>
            <person name="Visca P."/>
            <person name="Cassone A."/>
            <person name="Carattoli A."/>
        </authorList>
    </citation>
    <scope>NUCLEOTIDE SEQUENCE [LARGE SCALE GENOMIC DNA]</scope>
    <source>
        <strain>ACICU</strain>
    </source>
</reference>
<protein>
    <recommendedName>
        <fullName evidence="1">Ribosomal RNA large subunit methyltransferase H</fullName>
        <ecNumber evidence="1">2.1.1.177</ecNumber>
    </recommendedName>
    <alternativeName>
        <fullName evidence="1">23S rRNA (pseudouridine1915-N3)-methyltransferase</fullName>
    </alternativeName>
    <alternativeName>
        <fullName evidence="1">23S rRNA m3Psi1915 methyltransferase</fullName>
    </alternativeName>
    <alternativeName>
        <fullName evidence="1">rRNA (pseudouridine-N3-)-methyltransferase RlmH</fullName>
    </alternativeName>
</protein>
<comment type="function">
    <text evidence="1">Specifically methylates the pseudouridine at position 1915 (m3Psi1915) in 23S rRNA.</text>
</comment>
<comment type="catalytic activity">
    <reaction evidence="1">
        <text>pseudouridine(1915) in 23S rRNA + S-adenosyl-L-methionine = N(3)-methylpseudouridine(1915) in 23S rRNA + S-adenosyl-L-homocysteine + H(+)</text>
        <dbReference type="Rhea" id="RHEA:42752"/>
        <dbReference type="Rhea" id="RHEA-COMP:10221"/>
        <dbReference type="Rhea" id="RHEA-COMP:10222"/>
        <dbReference type="ChEBI" id="CHEBI:15378"/>
        <dbReference type="ChEBI" id="CHEBI:57856"/>
        <dbReference type="ChEBI" id="CHEBI:59789"/>
        <dbReference type="ChEBI" id="CHEBI:65314"/>
        <dbReference type="ChEBI" id="CHEBI:74486"/>
        <dbReference type="EC" id="2.1.1.177"/>
    </reaction>
</comment>
<comment type="subunit">
    <text evidence="1">Homodimer.</text>
</comment>
<comment type="subcellular location">
    <subcellularLocation>
        <location evidence="1">Cytoplasm</location>
    </subcellularLocation>
</comment>
<comment type="similarity">
    <text evidence="1">Belongs to the RNA methyltransferase RlmH family.</text>
</comment>
<keyword id="KW-0963">Cytoplasm</keyword>
<keyword id="KW-0489">Methyltransferase</keyword>
<keyword id="KW-0698">rRNA processing</keyword>
<keyword id="KW-0949">S-adenosyl-L-methionine</keyword>
<keyword id="KW-0808">Transferase</keyword>
<evidence type="ECO:0000255" key="1">
    <source>
        <dbReference type="HAMAP-Rule" id="MF_00658"/>
    </source>
</evidence>
<proteinExistence type="inferred from homology"/>